<evidence type="ECO:0000255" key="1">
    <source>
        <dbReference type="HAMAP-Rule" id="MF_00294"/>
    </source>
</evidence>
<sequence length="49" mass="5932">MRVNVTLACTECGDRNYITTKNKRNNPERIEMKKYCPRLNKYTLHRETK</sequence>
<organism>
    <name type="scientific">Staphylococcus aureus (strain COL)</name>
    <dbReference type="NCBI Taxonomy" id="93062"/>
    <lineage>
        <taxon>Bacteria</taxon>
        <taxon>Bacillati</taxon>
        <taxon>Bacillota</taxon>
        <taxon>Bacilli</taxon>
        <taxon>Bacillales</taxon>
        <taxon>Staphylococcaceae</taxon>
        <taxon>Staphylococcus</taxon>
    </lineage>
</organism>
<name>RL332_STAAC</name>
<reference key="1">
    <citation type="journal article" date="2005" name="J. Bacteriol.">
        <title>Insights on evolution of virulence and resistance from the complete genome analysis of an early methicillin-resistant Staphylococcus aureus strain and a biofilm-producing methicillin-resistant Staphylococcus epidermidis strain.</title>
        <authorList>
            <person name="Gill S.R."/>
            <person name="Fouts D.E."/>
            <person name="Archer G.L."/>
            <person name="Mongodin E.F."/>
            <person name="DeBoy R.T."/>
            <person name="Ravel J."/>
            <person name="Paulsen I.T."/>
            <person name="Kolonay J.F."/>
            <person name="Brinkac L.M."/>
            <person name="Beanan M.J."/>
            <person name="Dodson R.J."/>
            <person name="Daugherty S.C."/>
            <person name="Madupu R."/>
            <person name="Angiuoli S.V."/>
            <person name="Durkin A.S."/>
            <person name="Haft D.H."/>
            <person name="Vamathevan J.J."/>
            <person name="Khouri H."/>
            <person name="Utterback T.R."/>
            <person name="Lee C."/>
            <person name="Dimitrov G."/>
            <person name="Jiang L."/>
            <person name="Qin H."/>
            <person name="Weidman J."/>
            <person name="Tran K."/>
            <person name="Kang K.H."/>
            <person name="Hance I.R."/>
            <person name="Nelson K.E."/>
            <person name="Fraser C.M."/>
        </authorList>
    </citation>
    <scope>NUCLEOTIDE SEQUENCE [LARGE SCALE GENOMIC DNA]</scope>
    <source>
        <strain>COL</strain>
    </source>
</reference>
<feature type="chain" id="PRO_0000170211" description="Large ribosomal subunit protein bL33B">
    <location>
        <begin position="1"/>
        <end position="49"/>
    </location>
</feature>
<keyword id="KW-0687">Ribonucleoprotein</keyword>
<keyword id="KW-0689">Ribosomal protein</keyword>
<accession>Q5HG85</accession>
<gene>
    <name evidence="1" type="primary">rpmG2</name>
    <name type="ordered locus">SACOL1369</name>
</gene>
<protein>
    <recommendedName>
        <fullName evidence="1">Large ribosomal subunit protein bL33B</fullName>
    </recommendedName>
    <alternativeName>
        <fullName evidence="1">50S ribosomal protein L33 2</fullName>
    </alternativeName>
</protein>
<comment type="similarity">
    <text evidence="1">Belongs to the bacterial ribosomal protein bL33 family.</text>
</comment>
<dbReference type="EMBL" id="CP000046">
    <property type="protein sequence ID" value="AAW36618.1"/>
    <property type="molecule type" value="Genomic_DNA"/>
</dbReference>
<dbReference type="SMR" id="Q5HG85"/>
<dbReference type="KEGG" id="sac:SACOL1369"/>
<dbReference type="HOGENOM" id="CLU_190949_0_2_9"/>
<dbReference type="Proteomes" id="UP000000530">
    <property type="component" value="Chromosome"/>
</dbReference>
<dbReference type="GO" id="GO:0005737">
    <property type="term" value="C:cytoplasm"/>
    <property type="evidence" value="ECO:0007669"/>
    <property type="project" value="UniProtKB-ARBA"/>
</dbReference>
<dbReference type="GO" id="GO:1990904">
    <property type="term" value="C:ribonucleoprotein complex"/>
    <property type="evidence" value="ECO:0007669"/>
    <property type="project" value="UniProtKB-KW"/>
</dbReference>
<dbReference type="GO" id="GO:0005840">
    <property type="term" value="C:ribosome"/>
    <property type="evidence" value="ECO:0007669"/>
    <property type="project" value="UniProtKB-KW"/>
</dbReference>
<dbReference type="GO" id="GO:0003735">
    <property type="term" value="F:structural constituent of ribosome"/>
    <property type="evidence" value="ECO:0007669"/>
    <property type="project" value="InterPro"/>
</dbReference>
<dbReference type="GO" id="GO:0006412">
    <property type="term" value="P:translation"/>
    <property type="evidence" value="ECO:0007669"/>
    <property type="project" value="UniProtKB-UniRule"/>
</dbReference>
<dbReference type="Gene3D" id="2.20.28.120">
    <property type="entry name" value="Ribosomal protein L33"/>
    <property type="match status" value="1"/>
</dbReference>
<dbReference type="HAMAP" id="MF_00294">
    <property type="entry name" value="Ribosomal_bL33"/>
    <property type="match status" value="1"/>
</dbReference>
<dbReference type="InterPro" id="IPR001705">
    <property type="entry name" value="Ribosomal_bL33"/>
</dbReference>
<dbReference type="InterPro" id="IPR018264">
    <property type="entry name" value="Ribosomal_bL33_CS"/>
</dbReference>
<dbReference type="InterPro" id="IPR038584">
    <property type="entry name" value="Ribosomal_bL33_sf"/>
</dbReference>
<dbReference type="InterPro" id="IPR011332">
    <property type="entry name" value="Ribosomal_zn-bd"/>
</dbReference>
<dbReference type="NCBIfam" id="NF001764">
    <property type="entry name" value="PRK00504.1"/>
    <property type="match status" value="1"/>
</dbReference>
<dbReference type="NCBIfam" id="NF001860">
    <property type="entry name" value="PRK00595.1"/>
    <property type="match status" value="1"/>
</dbReference>
<dbReference type="NCBIfam" id="TIGR01023">
    <property type="entry name" value="rpmG_bact"/>
    <property type="match status" value="1"/>
</dbReference>
<dbReference type="PANTHER" id="PTHR43168">
    <property type="entry name" value="50S RIBOSOMAL PROTEIN L33, CHLOROPLASTIC"/>
    <property type="match status" value="1"/>
</dbReference>
<dbReference type="PANTHER" id="PTHR43168:SF2">
    <property type="entry name" value="LARGE RIBOSOMAL SUBUNIT PROTEIN BL33C"/>
    <property type="match status" value="1"/>
</dbReference>
<dbReference type="Pfam" id="PF00471">
    <property type="entry name" value="Ribosomal_L33"/>
    <property type="match status" value="1"/>
</dbReference>
<dbReference type="SUPFAM" id="SSF57829">
    <property type="entry name" value="Zn-binding ribosomal proteins"/>
    <property type="match status" value="1"/>
</dbReference>
<dbReference type="PROSITE" id="PS00582">
    <property type="entry name" value="RIBOSOMAL_L33"/>
    <property type="match status" value="1"/>
</dbReference>
<proteinExistence type="inferred from homology"/>